<sequence>MKNKFVELVEKSQLRNDLPEFNPGDSITVNLWIKEGDKQRIQAFKGFVLRKRNRGLHSAFTVRKMSSGMGVERTFQTHSPLIDSIIVEKRADVRRAKLYYMRGLTGKAARIKEKV</sequence>
<accession>A7NEB0</accession>
<evidence type="ECO:0000255" key="1">
    <source>
        <dbReference type="HAMAP-Rule" id="MF_00402"/>
    </source>
</evidence>
<evidence type="ECO:0000305" key="2"/>
<comment type="function">
    <text evidence="1">This protein is located at the 30S-50S ribosomal subunit interface and may play a role in the structure and function of the aminoacyl-tRNA binding site.</text>
</comment>
<comment type="similarity">
    <text evidence="1">Belongs to the bacterial ribosomal protein bL19 family.</text>
</comment>
<dbReference type="EMBL" id="CP000803">
    <property type="protein sequence ID" value="ABU62313.1"/>
    <property type="molecule type" value="Genomic_DNA"/>
</dbReference>
<dbReference type="RefSeq" id="WP_003017210.1">
    <property type="nucleotide sequence ID" value="NC_009749.1"/>
</dbReference>
<dbReference type="SMR" id="A7NEB0"/>
<dbReference type="KEGG" id="fta:FTA_1838"/>
<dbReference type="HOGENOM" id="CLU_103507_2_2_6"/>
<dbReference type="GO" id="GO:0022625">
    <property type="term" value="C:cytosolic large ribosomal subunit"/>
    <property type="evidence" value="ECO:0007669"/>
    <property type="project" value="TreeGrafter"/>
</dbReference>
<dbReference type="GO" id="GO:0003735">
    <property type="term" value="F:structural constituent of ribosome"/>
    <property type="evidence" value="ECO:0007669"/>
    <property type="project" value="InterPro"/>
</dbReference>
<dbReference type="GO" id="GO:0006412">
    <property type="term" value="P:translation"/>
    <property type="evidence" value="ECO:0007669"/>
    <property type="project" value="UniProtKB-UniRule"/>
</dbReference>
<dbReference type="FunFam" id="2.30.30.790:FF:000001">
    <property type="entry name" value="50S ribosomal protein L19"/>
    <property type="match status" value="1"/>
</dbReference>
<dbReference type="Gene3D" id="2.30.30.790">
    <property type="match status" value="1"/>
</dbReference>
<dbReference type="HAMAP" id="MF_00402">
    <property type="entry name" value="Ribosomal_bL19"/>
    <property type="match status" value="1"/>
</dbReference>
<dbReference type="InterPro" id="IPR001857">
    <property type="entry name" value="Ribosomal_bL19"/>
</dbReference>
<dbReference type="InterPro" id="IPR018257">
    <property type="entry name" value="Ribosomal_bL19_CS"/>
</dbReference>
<dbReference type="InterPro" id="IPR038657">
    <property type="entry name" value="Ribosomal_bL19_sf"/>
</dbReference>
<dbReference type="InterPro" id="IPR008991">
    <property type="entry name" value="Translation_prot_SH3-like_sf"/>
</dbReference>
<dbReference type="NCBIfam" id="TIGR01024">
    <property type="entry name" value="rplS_bact"/>
    <property type="match status" value="1"/>
</dbReference>
<dbReference type="PANTHER" id="PTHR15680:SF9">
    <property type="entry name" value="LARGE RIBOSOMAL SUBUNIT PROTEIN BL19M"/>
    <property type="match status" value="1"/>
</dbReference>
<dbReference type="PANTHER" id="PTHR15680">
    <property type="entry name" value="RIBOSOMAL PROTEIN L19"/>
    <property type="match status" value="1"/>
</dbReference>
<dbReference type="Pfam" id="PF01245">
    <property type="entry name" value="Ribosomal_L19"/>
    <property type="match status" value="1"/>
</dbReference>
<dbReference type="PIRSF" id="PIRSF002191">
    <property type="entry name" value="Ribosomal_L19"/>
    <property type="match status" value="1"/>
</dbReference>
<dbReference type="PRINTS" id="PR00061">
    <property type="entry name" value="RIBOSOMALL19"/>
</dbReference>
<dbReference type="SUPFAM" id="SSF50104">
    <property type="entry name" value="Translation proteins SH3-like domain"/>
    <property type="match status" value="1"/>
</dbReference>
<dbReference type="PROSITE" id="PS01015">
    <property type="entry name" value="RIBOSOMAL_L19"/>
    <property type="match status" value="1"/>
</dbReference>
<keyword id="KW-0687">Ribonucleoprotein</keyword>
<keyword id="KW-0689">Ribosomal protein</keyword>
<proteinExistence type="inferred from homology"/>
<reference key="1">
    <citation type="journal article" date="2009" name="PLoS ONE">
        <title>Complete genome sequence of Francisella tularensis subspecies holarctica FTNF002-00.</title>
        <authorList>
            <person name="Barabote R.D."/>
            <person name="Xie G."/>
            <person name="Brettin T.S."/>
            <person name="Hinrichs S.H."/>
            <person name="Fey P.D."/>
            <person name="Jay J.J."/>
            <person name="Engle J.L."/>
            <person name="Godbole S.D."/>
            <person name="Noronha J.M."/>
            <person name="Scheuermann R.H."/>
            <person name="Zhou L.W."/>
            <person name="Lion C."/>
            <person name="Dempsey M.P."/>
        </authorList>
    </citation>
    <scope>NUCLEOTIDE SEQUENCE [LARGE SCALE GENOMIC DNA]</scope>
    <source>
        <strain>FTNF002-00 / FTA</strain>
    </source>
</reference>
<gene>
    <name evidence="1" type="primary">rplS</name>
    <name type="ordered locus">FTA_1838</name>
</gene>
<feature type="chain" id="PRO_1000049677" description="Large ribosomal subunit protein bL19">
    <location>
        <begin position="1"/>
        <end position="115"/>
    </location>
</feature>
<organism>
    <name type="scientific">Francisella tularensis subsp. holarctica (strain FTNF002-00 / FTA)</name>
    <dbReference type="NCBI Taxonomy" id="458234"/>
    <lineage>
        <taxon>Bacteria</taxon>
        <taxon>Pseudomonadati</taxon>
        <taxon>Pseudomonadota</taxon>
        <taxon>Gammaproteobacteria</taxon>
        <taxon>Thiotrichales</taxon>
        <taxon>Francisellaceae</taxon>
        <taxon>Francisella</taxon>
    </lineage>
</organism>
<name>RL19_FRATF</name>
<protein>
    <recommendedName>
        <fullName evidence="1">Large ribosomal subunit protein bL19</fullName>
    </recommendedName>
    <alternativeName>
        <fullName evidence="2">50S ribosomal protein L19</fullName>
    </alternativeName>
</protein>